<proteinExistence type="evidence at protein level"/>
<accession>P58807</accession>
<comment type="function">
    <text evidence="1">Chi-conotoxins inhibit the neuronal noradrenaline transporter (NET/SLC6A2).</text>
</comment>
<comment type="subcellular location">
    <subcellularLocation>
        <location evidence="2">Secreted</location>
    </subcellularLocation>
</comment>
<comment type="tissue specificity">
    <text evidence="5">Expressed by the venom duct.</text>
</comment>
<comment type="domain">
    <text evidence="4">The cysteine framework is X (CC-CX[hydroxyPro]C).</text>
</comment>
<comment type="mass spectrometry" mass="1237.93" error="0.21" method="Electrospray" evidence="2"/>
<comment type="similarity">
    <text evidence="4">Belongs to the conotoxin T superfamily.</text>
</comment>
<sequence length="11" mass="1226">VCCGYKLCHPC</sequence>
<reference key="1">
    <citation type="journal article" date="2000" name="J. Biol. Chem.">
        <title>Lambda-conotoxins, a new family of conotoxins with unique disulfide pattern and protein folding. Isolation and characterization from the venom of Conus marmoreus.</title>
        <authorList>
            <person name="Balaji R.A."/>
            <person name="Ohtake A."/>
            <person name="Sato K."/>
            <person name="Gopalakrishnakone P."/>
            <person name="Kini R.M."/>
            <person name="Seow K.T."/>
            <person name="Bay B.-H."/>
        </authorList>
    </citation>
    <scope>PROTEIN SEQUENCE</scope>
    <scope>HYDROXYLATION AT PRO-10</scope>
    <scope>DISULFIDE BONDS</scope>
    <scope>SYNTHESIS</scope>
    <scope>MASS SPECTROMETRY</scope>
    <scope>SUBCELLULAR LOCATION</scope>
    <source>
        <tissue>Venom</tissue>
    </source>
</reference>
<reference key="2">
    <citation type="journal article" date="2006" name="Biomacromolecules">
        <title>Solution structures of two structural isoforms of CMrVIA chi/lambda-conotoxin.</title>
        <authorList>
            <person name="Kang T.S."/>
            <person name="Jois S.D.S."/>
            <person name="Kini R.M."/>
        </authorList>
    </citation>
    <scope>STRUCTURE BY NMR</scope>
    <scope>SYNTHESIS</scope>
    <scope>HYDROXYLATION AT PRO-10</scope>
    <scope>DISULFIDE BONDS</scope>
</reference>
<protein>
    <recommendedName>
        <fullName>Chi-conotoxin CMrVIA</fullName>
    </recommendedName>
    <alternativeName>
        <fullName>Conotoxin CMrVIA</fullName>
    </alternativeName>
    <alternativeName>
        <fullName>Lambda-conotoxin CMrVIA</fullName>
    </alternativeName>
</protein>
<organism>
    <name type="scientific">Conus marmoreus</name>
    <name type="common">Marble cone</name>
    <dbReference type="NCBI Taxonomy" id="42752"/>
    <lineage>
        <taxon>Eukaryota</taxon>
        <taxon>Metazoa</taxon>
        <taxon>Spiralia</taxon>
        <taxon>Lophotrochozoa</taxon>
        <taxon>Mollusca</taxon>
        <taxon>Gastropoda</taxon>
        <taxon>Caenogastropoda</taxon>
        <taxon>Neogastropoda</taxon>
        <taxon>Conoidea</taxon>
        <taxon>Conidae</taxon>
        <taxon>Conus</taxon>
    </lineage>
</organism>
<keyword id="KW-0002">3D-structure</keyword>
<keyword id="KW-0903">Direct protein sequencing</keyword>
<keyword id="KW-1015">Disulfide bond</keyword>
<keyword id="KW-0379">Hydroxylation</keyword>
<keyword id="KW-0528">Neurotoxin</keyword>
<keyword id="KW-0964">Secreted</keyword>
<keyword id="KW-0800">Toxin</keyword>
<evidence type="ECO:0000250" key="1">
    <source>
        <dbReference type="UniProtKB" id="P58808"/>
    </source>
</evidence>
<evidence type="ECO:0000269" key="2">
    <source>
    </source>
</evidence>
<evidence type="ECO:0000269" key="3">
    <source>
    </source>
</evidence>
<evidence type="ECO:0000305" key="4"/>
<evidence type="ECO:0000305" key="5">
    <source>
    </source>
</evidence>
<evidence type="ECO:0000312" key="6">
    <source>
        <dbReference type="PDB" id="2B5P"/>
    </source>
</evidence>
<evidence type="ECO:0000312" key="7">
    <source>
        <dbReference type="PDB" id="2B5Q"/>
    </source>
</evidence>
<evidence type="ECO:0007829" key="8">
    <source>
        <dbReference type="PDB" id="2B5Q"/>
    </source>
</evidence>
<name>CTA6A_CONMR</name>
<dbReference type="PDB" id="2B5P">
    <property type="method" value="NMR"/>
    <property type="chains" value="A=1-11"/>
</dbReference>
<dbReference type="PDB" id="2B5Q">
    <property type="method" value="NMR"/>
    <property type="chains" value="A=1-11"/>
</dbReference>
<dbReference type="PDBsum" id="2B5P"/>
<dbReference type="PDBsum" id="2B5Q"/>
<dbReference type="SMR" id="P58807"/>
<dbReference type="EvolutionaryTrace" id="P58807"/>
<dbReference type="GO" id="GO:0005576">
    <property type="term" value="C:extracellular region"/>
    <property type="evidence" value="ECO:0007669"/>
    <property type="project" value="UniProtKB-SubCell"/>
</dbReference>
<dbReference type="GO" id="GO:0090729">
    <property type="term" value="F:toxin activity"/>
    <property type="evidence" value="ECO:0007669"/>
    <property type="project" value="UniProtKB-KW"/>
</dbReference>
<feature type="peptide" id="PRO_0000044507" description="Chi-conotoxin CMrVIA" evidence="2">
    <location>
        <begin position="1"/>
        <end position="11"/>
    </location>
</feature>
<feature type="modified residue" description="4-hydroxyproline" evidence="2 3">
    <location>
        <position position="10"/>
    </location>
</feature>
<feature type="disulfide bond" evidence="3 6 7">
    <location>
        <begin position="2"/>
        <end position="11"/>
    </location>
</feature>
<feature type="disulfide bond" evidence="3 6 7">
    <location>
        <begin position="3"/>
        <end position="8"/>
    </location>
</feature>
<feature type="turn" evidence="8">
    <location>
        <begin position="4"/>
        <end position="6"/>
    </location>
</feature>